<organism>
    <name type="scientific">Tolumonas auensis (strain DSM 9187 / NBRC 110442 / TA 4)</name>
    <dbReference type="NCBI Taxonomy" id="595494"/>
    <lineage>
        <taxon>Bacteria</taxon>
        <taxon>Pseudomonadati</taxon>
        <taxon>Pseudomonadota</taxon>
        <taxon>Gammaproteobacteria</taxon>
        <taxon>Aeromonadales</taxon>
        <taxon>Aeromonadaceae</taxon>
        <taxon>Tolumonas</taxon>
    </lineage>
</organism>
<accession>C4LCY4</accession>
<comment type="function">
    <text evidence="1">Cell wall formation. Adds enolpyruvyl to UDP-N-acetylglucosamine.</text>
</comment>
<comment type="catalytic activity">
    <reaction evidence="1">
        <text>phosphoenolpyruvate + UDP-N-acetyl-alpha-D-glucosamine = UDP-N-acetyl-3-O-(1-carboxyvinyl)-alpha-D-glucosamine + phosphate</text>
        <dbReference type="Rhea" id="RHEA:18681"/>
        <dbReference type="ChEBI" id="CHEBI:43474"/>
        <dbReference type="ChEBI" id="CHEBI:57705"/>
        <dbReference type="ChEBI" id="CHEBI:58702"/>
        <dbReference type="ChEBI" id="CHEBI:68483"/>
        <dbReference type="EC" id="2.5.1.7"/>
    </reaction>
</comment>
<comment type="pathway">
    <text evidence="1">Cell wall biogenesis; peptidoglycan biosynthesis.</text>
</comment>
<comment type="subcellular location">
    <subcellularLocation>
        <location evidence="1">Cytoplasm</location>
    </subcellularLocation>
</comment>
<comment type="similarity">
    <text evidence="1">Belongs to the EPSP synthase family. MurA subfamily.</text>
</comment>
<dbReference type="EC" id="2.5.1.7" evidence="1"/>
<dbReference type="EMBL" id="CP001616">
    <property type="protein sequence ID" value="ACQ94515.1"/>
    <property type="molecule type" value="Genomic_DNA"/>
</dbReference>
<dbReference type="RefSeq" id="WP_015879964.1">
    <property type="nucleotide sequence ID" value="NC_012691.1"/>
</dbReference>
<dbReference type="SMR" id="C4LCY4"/>
<dbReference type="STRING" id="595494.Tola_2926"/>
<dbReference type="KEGG" id="tau:Tola_2926"/>
<dbReference type="eggNOG" id="COG0766">
    <property type="taxonomic scope" value="Bacteria"/>
</dbReference>
<dbReference type="HOGENOM" id="CLU_027387_0_0_6"/>
<dbReference type="OrthoDB" id="9803760at2"/>
<dbReference type="UniPathway" id="UPA00219"/>
<dbReference type="Proteomes" id="UP000009073">
    <property type="component" value="Chromosome"/>
</dbReference>
<dbReference type="GO" id="GO:0005737">
    <property type="term" value="C:cytoplasm"/>
    <property type="evidence" value="ECO:0007669"/>
    <property type="project" value="UniProtKB-SubCell"/>
</dbReference>
<dbReference type="GO" id="GO:0008760">
    <property type="term" value="F:UDP-N-acetylglucosamine 1-carboxyvinyltransferase activity"/>
    <property type="evidence" value="ECO:0007669"/>
    <property type="project" value="UniProtKB-UniRule"/>
</dbReference>
<dbReference type="GO" id="GO:0051301">
    <property type="term" value="P:cell division"/>
    <property type="evidence" value="ECO:0007669"/>
    <property type="project" value="UniProtKB-KW"/>
</dbReference>
<dbReference type="GO" id="GO:0071555">
    <property type="term" value="P:cell wall organization"/>
    <property type="evidence" value="ECO:0007669"/>
    <property type="project" value="UniProtKB-KW"/>
</dbReference>
<dbReference type="GO" id="GO:0009252">
    <property type="term" value="P:peptidoglycan biosynthetic process"/>
    <property type="evidence" value="ECO:0007669"/>
    <property type="project" value="UniProtKB-UniRule"/>
</dbReference>
<dbReference type="GO" id="GO:0008360">
    <property type="term" value="P:regulation of cell shape"/>
    <property type="evidence" value="ECO:0007669"/>
    <property type="project" value="UniProtKB-KW"/>
</dbReference>
<dbReference type="GO" id="GO:0019277">
    <property type="term" value="P:UDP-N-acetylgalactosamine biosynthetic process"/>
    <property type="evidence" value="ECO:0007669"/>
    <property type="project" value="InterPro"/>
</dbReference>
<dbReference type="CDD" id="cd01555">
    <property type="entry name" value="UdpNAET"/>
    <property type="match status" value="1"/>
</dbReference>
<dbReference type="FunFam" id="3.65.10.10:FF:000001">
    <property type="entry name" value="UDP-N-acetylglucosamine 1-carboxyvinyltransferase"/>
    <property type="match status" value="1"/>
</dbReference>
<dbReference type="Gene3D" id="3.65.10.10">
    <property type="entry name" value="Enolpyruvate transferase domain"/>
    <property type="match status" value="2"/>
</dbReference>
<dbReference type="HAMAP" id="MF_00111">
    <property type="entry name" value="MurA"/>
    <property type="match status" value="1"/>
</dbReference>
<dbReference type="InterPro" id="IPR001986">
    <property type="entry name" value="Enolpyruvate_Tfrase_dom"/>
</dbReference>
<dbReference type="InterPro" id="IPR036968">
    <property type="entry name" value="Enolpyruvate_Tfrase_sf"/>
</dbReference>
<dbReference type="InterPro" id="IPR050068">
    <property type="entry name" value="MurA_subfamily"/>
</dbReference>
<dbReference type="InterPro" id="IPR013792">
    <property type="entry name" value="RNA3'P_cycl/enolpyr_Trfase_a/b"/>
</dbReference>
<dbReference type="InterPro" id="IPR005750">
    <property type="entry name" value="UDP_GlcNAc_COvinyl_MurA"/>
</dbReference>
<dbReference type="NCBIfam" id="TIGR01072">
    <property type="entry name" value="murA"/>
    <property type="match status" value="1"/>
</dbReference>
<dbReference type="NCBIfam" id="NF006873">
    <property type="entry name" value="PRK09369.1"/>
    <property type="match status" value="1"/>
</dbReference>
<dbReference type="PANTHER" id="PTHR43783">
    <property type="entry name" value="UDP-N-ACETYLGLUCOSAMINE 1-CARBOXYVINYLTRANSFERASE"/>
    <property type="match status" value="1"/>
</dbReference>
<dbReference type="PANTHER" id="PTHR43783:SF1">
    <property type="entry name" value="UDP-N-ACETYLGLUCOSAMINE 1-CARBOXYVINYLTRANSFERASE"/>
    <property type="match status" value="1"/>
</dbReference>
<dbReference type="Pfam" id="PF00275">
    <property type="entry name" value="EPSP_synthase"/>
    <property type="match status" value="1"/>
</dbReference>
<dbReference type="SUPFAM" id="SSF55205">
    <property type="entry name" value="EPT/RTPC-like"/>
    <property type="match status" value="1"/>
</dbReference>
<gene>
    <name evidence="1" type="primary">murA</name>
    <name type="ordered locus">Tola_2926</name>
</gene>
<reference key="1">
    <citation type="submission" date="2009-05" db="EMBL/GenBank/DDBJ databases">
        <title>Complete sequence of Tolumonas auensis DSM 9187.</title>
        <authorList>
            <consortium name="US DOE Joint Genome Institute"/>
            <person name="Lucas S."/>
            <person name="Copeland A."/>
            <person name="Lapidus A."/>
            <person name="Glavina del Rio T."/>
            <person name="Tice H."/>
            <person name="Bruce D."/>
            <person name="Goodwin L."/>
            <person name="Pitluck S."/>
            <person name="Chertkov O."/>
            <person name="Brettin T."/>
            <person name="Detter J.C."/>
            <person name="Han C."/>
            <person name="Larimer F."/>
            <person name="Land M."/>
            <person name="Hauser L."/>
            <person name="Kyrpides N."/>
            <person name="Mikhailova N."/>
            <person name="Spring S."/>
            <person name="Beller H."/>
        </authorList>
    </citation>
    <scope>NUCLEOTIDE SEQUENCE [LARGE SCALE GENOMIC DNA]</scope>
    <source>
        <strain>DSM 9187 / NBRC 110442 / TA 4</strain>
    </source>
</reference>
<name>MURA_TOLAT</name>
<evidence type="ECO:0000255" key="1">
    <source>
        <dbReference type="HAMAP-Rule" id="MF_00111"/>
    </source>
</evidence>
<proteinExistence type="inferred from homology"/>
<sequence length="419" mass="44599">MDKFRVQGPTQLTGEVIISGAKNAALPILFAALLAEEPVEIQNVPKLRDIDTTMKLLSQLGARVERNGSVHVDAGPVNVFCAPYDLVKTMRASIWALGPLVARFGQGQVSLPGGCAIGARPVDLHINGLEQLGAKITLEEGYVKASVNGRLKGAHIVMDKVSVGATVTIMCAATLAEGKTIIENAAREPEIVDTANFLNTMGAKISGAGSDKIIIEGVKRLGGGVYRVLPDRIETGTFLVAAAVTGGKIVCRNTRPDTLDAVLAKLTDAGADIEVGEDWISLDMQGRRPKAVNIRTAPHPGFPTDMQAQFSLLNMVAEGTGVITETIFENRFMHIPELIRMGGHAEIESNTVICQGVARLSGAQVMATDLRASASLVIAGFVAQGTTIVDRIYHIDRGYESIEEKFRALGGQIDRIKGE</sequence>
<keyword id="KW-0131">Cell cycle</keyword>
<keyword id="KW-0132">Cell division</keyword>
<keyword id="KW-0133">Cell shape</keyword>
<keyword id="KW-0961">Cell wall biogenesis/degradation</keyword>
<keyword id="KW-0963">Cytoplasm</keyword>
<keyword id="KW-0573">Peptidoglycan synthesis</keyword>
<keyword id="KW-0670">Pyruvate</keyword>
<keyword id="KW-1185">Reference proteome</keyword>
<keyword id="KW-0808">Transferase</keyword>
<feature type="chain" id="PRO_1000202936" description="UDP-N-acetylglucosamine 1-carboxyvinyltransferase">
    <location>
        <begin position="1"/>
        <end position="419"/>
    </location>
</feature>
<feature type="active site" description="Proton donor" evidence="1">
    <location>
        <position position="115"/>
    </location>
</feature>
<feature type="binding site" evidence="1">
    <location>
        <begin position="22"/>
        <end position="23"/>
    </location>
    <ligand>
        <name>phosphoenolpyruvate</name>
        <dbReference type="ChEBI" id="CHEBI:58702"/>
    </ligand>
</feature>
<feature type="binding site" evidence="1">
    <location>
        <position position="91"/>
    </location>
    <ligand>
        <name>UDP-N-acetyl-alpha-D-glucosamine</name>
        <dbReference type="ChEBI" id="CHEBI:57705"/>
    </ligand>
</feature>
<feature type="binding site" evidence="1">
    <location>
        <begin position="120"/>
        <end position="124"/>
    </location>
    <ligand>
        <name>UDP-N-acetyl-alpha-D-glucosamine</name>
        <dbReference type="ChEBI" id="CHEBI:57705"/>
    </ligand>
</feature>
<feature type="binding site" evidence="1">
    <location>
        <begin position="160"/>
        <end position="163"/>
    </location>
    <ligand>
        <name>UDP-N-acetyl-alpha-D-glucosamine</name>
        <dbReference type="ChEBI" id="CHEBI:57705"/>
    </ligand>
</feature>
<feature type="binding site" evidence="1">
    <location>
        <position position="305"/>
    </location>
    <ligand>
        <name>UDP-N-acetyl-alpha-D-glucosamine</name>
        <dbReference type="ChEBI" id="CHEBI:57705"/>
    </ligand>
</feature>
<feature type="binding site" evidence="1">
    <location>
        <position position="327"/>
    </location>
    <ligand>
        <name>UDP-N-acetyl-alpha-D-glucosamine</name>
        <dbReference type="ChEBI" id="CHEBI:57705"/>
    </ligand>
</feature>
<feature type="modified residue" description="2-(S-cysteinyl)pyruvic acid O-phosphothioketal" evidence="1">
    <location>
        <position position="115"/>
    </location>
</feature>
<protein>
    <recommendedName>
        <fullName evidence="1">UDP-N-acetylglucosamine 1-carboxyvinyltransferase</fullName>
        <ecNumber evidence="1">2.5.1.7</ecNumber>
    </recommendedName>
    <alternativeName>
        <fullName evidence="1">Enoylpyruvate transferase</fullName>
    </alternativeName>
    <alternativeName>
        <fullName evidence="1">UDP-N-acetylglucosamine enolpyruvyl transferase</fullName>
        <shortName evidence="1">EPT</shortName>
    </alternativeName>
</protein>